<organism>
    <name type="scientific">Zea mays</name>
    <name type="common">Maize</name>
    <dbReference type="NCBI Taxonomy" id="4577"/>
    <lineage>
        <taxon>Eukaryota</taxon>
        <taxon>Viridiplantae</taxon>
        <taxon>Streptophyta</taxon>
        <taxon>Embryophyta</taxon>
        <taxon>Tracheophyta</taxon>
        <taxon>Spermatophyta</taxon>
        <taxon>Magnoliopsida</taxon>
        <taxon>Liliopsida</taxon>
        <taxon>Poales</taxon>
        <taxon>Poaceae</taxon>
        <taxon>PACMAD clade</taxon>
        <taxon>Panicoideae</taxon>
        <taxon>Andropogonodae</taxon>
        <taxon>Andropogoneae</taxon>
        <taxon>Tripsacinae</taxon>
        <taxon>Zea</taxon>
    </lineage>
</organism>
<reference key="1">
    <citation type="online journal article" date="1995" name="Plant Gene Register">
        <title>Nucleotide sequence of malate synthase cDNA in maize.</title>
        <authorList>
            <person name="Paek N.C."/>
            <person name="Taylor B.H."/>
            <person name="Smith J.D."/>
        </authorList>
        <locator>PGR95-015</locator>
    </citation>
    <scope>NUCLEOTIDE SEQUENCE [MRNA]</scope>
    <source>
        <strain>cv. Texas 5855</strain>
        <tissue>Scutellum</tissue>
    </source>
</reference>
<keyword id="KW-0329">Glyoxylate bypass</keyword>
<keyword id="KW-0330">Glyoxysome</keyword>
<keyword id="KW-0576">Peroxisome</keyword>
<keyword id="KW-1185">Reference proteome</keyword>
<keyword id="KW-0808">Transferase</keyword>
<keyword id="KW-0816">Tricarboxylic acid cycle</keyword>
<proteinExistence type="evidence at transcript level"/>
<accession>P49081</accession>
<dbReference type="EC" id="2.3.3.9"/>
<dbReference type="EMBL" id="L35914">
    <property type="protein sequence ID" value="AAB04118.1"/>
    <property type="molecule type" value="mRNA"/>
</dbReference>
<dbReference type="PIR" id="T03412">
    <property type="entry name" value="T03412"/>
</dbReference>
<dbReference type="RefSeq" id="NP_001105328.1">
    <property type="nucleotide sequence ID" value="NM_001111858.1"/>
</dbReference>
<dbReference type="SMR" id="P49081"/>
<dbReference type="FunCoup" id="P49081">
    <property type="interactions" value="378"/>
</dbReference>
<dbReference type="STRING" id="4577.P49081"/>
<dbReference type="PaxDb" id="4577-GRMZM2G102183_P03"/>
<dbReference type="GeneID" id="542252"/>
<dbReference type="KEGG" id="zma:542252"/>
<dbReference type="MaizeGDB" id="100137"/>
<dbReference type="eggNOG" id="KOG1261">
    <property type="taxonomic scope" value="Eukaryota"/>
</dbReference>
<dbReference type="InParanoid" id="P49081"/>
<dbReference type="OrthoDB" id="4078635at2759"/>
<dbReference type="UniPathway" id="UPA00703">
    <property type="reaction ID" value="UER00720"/>
</dbReference>
<dbReference type="Proteomes" id="UP000007305">
    <property type="component" value="Unplaced"/>
</dbReference>
<dbReference type="ExpressionAtlas" id="P49081">
    <property type="expression patterns" value="baseline and differential"/>
</dbReference>
<dbReference type="GO" id="GO:0005737">
    <property type="term" value="C:cytoplasm"/>
    <property type="evidence" value="ECO:0000318"/>
    <property type="project" value="GO_Central"/>
</dbReference>
<dbReference type="GO" id="GO:0009514">
    <property type="term" value="C:glyoxysome"/>
    <property type="evidence" value="ECO:0007669"/>
    <property type="project" value="UniProtKB-SubCell"/>
</dbReference>
<dbReference type="GO" id="GO:0004474">
    <property type="term" value="F:malate synthase activity"/>
    <property type="evidence" value="ECO:0000318"/>
    <property type="project" value="GO_Central"/>
</dbReference>
<dbReference type="GO" id="GO:0006097">
    <property type="term" value="P:glyoxylate cycle"/>
    <property type="evidence" value="ECO:0000318"/>
    <property type="project" value="GO_Central"/>
</dbReference>
<dbReference type="GO" id="GO:0006099">
    <property type="term" value="P:tricarboxylic acid cycle"/>
    <property type="evidence" value="ECO:0007669"/>
    <property type="project" value="UniProtKB-KW"/>
</dbReference>
<dbReference type="CDD" id="cd00727">
    <property type="entry name" value="malate_synt_A"/>
    <property type="match status" value="1"/>
</dbReference>
<dbReference type="FunFam" id="1.20.1220.12:FF:000001">
    <property type="entry name" value="Malate synthase"/>
    <property type="match status" value="1"/>
</dbReference>
<dbReference type="FunFam" id="3.20.20.360:FF:000001">
    <property type="entry name" value="Malate synthase"/>
    <property type="match status" value="1"/>
</dbReference>
<dbReference type="Gene3D" id="3.20.20.360">
    <property type="entry name" value="Malate synthase, domain 3"/>
    <property type="match status" value="1"/>
</dbReference>
<dbReference type="Gene3D" id="1.20.1220.12">
    <property type="entry name" value="Malate synthase, domain III"/>
    <property type="match status" value="1"/>
</dbReference>
<dbReference type="InterPro" id="IPR044856">
    <property type="entry name" value="Malate_synth_C_sf"/>
</dbReference>
<dbReference type="InterPro" id="IPR011076">
    <property type="entry name" value="Malate_synth_sf"/>
</dbReference>
<dbReference type="InterPro" id="IPR006252">
    <property type="entry name" value="Malate_synthA"/>
</dbReference>
<dbReference type="InterPro" id="IPR019830">
    <property type="entry name" value="Malate_synthase_CS"/>
</dbReference>
<dbReference type="InterPro" id="IPR001465">
    <property type="entry name" value="Malate_synthase_TIM"/>
</dbReference>
<dbReference type="InterPro" id="IPR048355">
    <property type="entry name" value="MS_C"/>
</dbReference>
<dbReference type="InterPro" id="IPR048356">
    <property type="entry name" value="MS_N"/>
</dbReference>
<dbReference type="InterPro" id="IPR046363">
    <property type="entry name" value="MS_N_TIM-barrel_dom"/>
</dbReference>
<dbReference type="NCBIfam" id="TIGR01344">
    <property type="entry name" value="malate_syn_A"/>
    <property type="match status" value="1"/>
</dbReference>
<dbReference type="PANTHER" id="PTHR42902">
    <property type="entry name" value="MALATE SYNTHASE"/>
    <property type="match status" value="1"/>
</dbReference>
<dbReference type="PANTHER" id="PTHR42902:SF1">
    <property type="entry name" value="MALATE SYNTHASE 1-RELATED"/>
    <property type="match status" value="1"/>
</dbReference>
<dbReference type="Pfam" id="PF20659">
    <property type="entry name" value="MS_C"/>
    <property type="match status" value="1"/>
</dbReference>
<dbReference type="Pfam" id="PF20656">
    <property type="entry name" value="MS_N"/>
    <property type="match status" value="1"/>
</dbReference>
<dbReference type="Pfam" id="PF01274">
    <property type="entry name" value="MS_TIM-barrel"/>
    <property type="match status" value="1"/>
</dbReference>
<dbReference type="PIRSF" id="PIRSF001363">
    <property type="entry name" value="Malate_synth"/>
    <property type="match status" value="1"/>
</dbReference>
<dbReference type="SUPFAM" id="SSF51645">
    <property type="entry name" value="Malate synthase G"/>
    <property type="match status" value="1"/>
</dbReference>
<dbReference type="PROSITE" id="PS00510">
    <property type="entry name" value="MALATE_SYNTHASE"/>
    <property type="match status" value="1"/>
</dbReference>
<evidence type="ECO:0000250" key="1"/>
<evidence type="ECO:0000255" key="2"/>
<evidence type="ECO:0000305" key="3"/>
<protein>
    <recommendedName>
        <fullName>Malate synthase, glyoxysomal</fullName>
        <ecNumber>2.3.3.9</ecNumber>
    </recommendedName>
</protein>
<comment type="catalytic activity">
    <reaction>
        <text>glyoxylate + acetyl-CoA + H2O = (S)-malate + CoA + H(+)</text>
        <dbReference type="Rhea" id="RHEA:18181"/>
        <dbReference type="ChEBI" id="CHEBI:15377"/>
        <dbReference type="ChEBI" id="CHEBI:15378"/>
        <dbReference type="ChEBI" id="CHEBI:15589"/>
        <dbReference type="ChEBI" id="CHEBI:36655"/>
        <dbReference type="ChEBI" id="CHEBI:57287"/>
        <dbReference type="ChEBI" id="CHEBI:57288"/>
        <dbReference type="EC" id="2.3.3.9"/>
    </reaction>
</comment>
<comment type="pathway">
    <text>Carbohydrate metabolism; glyoxylate cycle; (S)-malate from isocitrate: step 2/2.</text>
</comment>
<comment type="subcellular location">
    <subcellularLocation>
        <location>Glyoxysome</location>
    </subcellularLocation>
</comment>
<comment type="similarity">
    <text evidence="3">Belongs to the malate synthase family.</text>
</comment>
<sequence>MAASTAAPCYDAPEGVDVRGRYDREFAGILTRDALDFVAGLQREFRGAVRYAMEQRREAQRRYDAGELPRFDPATTLVREGDWTCASVPPAVADRTVEITGPAEPRKMVINALNSGAKVFMADFEDAMSPTWENLMHGQVNLRDAVAGTISFRDAPRGRTYELNDRTAKLFVRPRGWHLPEAHILIDGEPAIGCLVDFGLYFFHNHAAFGAGQGAGFGPLCDLPKMEHSREARIWNGVFQRAEKAAGIEPGSIRATVLVETLPAVFQMNEILHELREHSAGLNCGRWDYIFSYVKTFRAHPDRLLPDRALVGMAQHFMRSYSHLLIHTCHRRGVHAMGGMAAQIPIKDDAAANEAALELVRKDKLREVRAGHDGTWAAHPGLIPAIREVFEGHLGGRPNQIGDAAGHEGASVKEEDLIQPPRGARTVDGLRLNVRVGVQYLAAWLAGSGSVPLYNLMEDAATAEISRVQNWQWLRHGAALDAGGVEVRATPELLARVVEEEMARVEAEVGPDRFRKGRYAEAGRIFSRQCTAPELDDFLTLDAYNLIVAHHPGASPCKL</sequence>
<name>MASY_MAIZE</name>
<feature type="chain" id="PRO_0000166870" description="Malate synthase, glyoxysomal">
    <location>
        <begin position="1"/>
        <end position="559"/>
    </location>
</feature>
<feature type="short sequence motif" description="Microbody targeting signal" evidence="2">
    <location>
        <begin position="557"/>
        <end position="559"/>
    </location>
</feature>
<feature type="active site" description="Proton acceptor" evidence="1">
    <location>
        <position position="173"/>
    </location>
</feature>
<feature type="active site" description="Proton donor" evidence="1">
    <location>
        <position position="459"/>
    </location>
</feature>
<gene>
    <name type="primary">LIP</name>
</gene>